<name>TRPD_BURMS</name>
<reference key="1">
    <citation type="journal article" date="2010" name="Genome Biol. Evol.">
        <title>Continuing evolution of Burkholderia mallei through genome reduction and large-scale rearrangements.</title>
        <authorList>
            <person name="Losada L."/>
            <person name="Ronning C.M."/>
            <person name="DeShazer D."/>
            <person name="Woods D."/>
            <person name="Fedorova N."/>
            <person name="Kim H.S."/>
            <person name="Shabalina S.A."/>
            <person name="Pearson T.R."/>
            <person name="Brinkac L."/>
            <person name="Tan P."/>
            <person name="Nandi T."/>
            <person name="Crabtree J."/>
            <person name="Badger J."/>
            <person name="Beckstrom-Sternberg S."/>
            <person name="Saqib M."/>
            <person name="Schutzer S.E."/>
            <person name="Keim P."/>
            <person name="Nierman W.C."/>
        </authorList>
    </citation>
    <scope>NUCLEOTIDE SEQUENCE [LARGE SCALE GENOMIC DNA]</scope>
    <source>
        <strain>SAVP1</strain>
    </source>
</reference>
<evidence type="ECO:0000255" key="1">
    <source>
        <dbReference type="HAMAP-Rule" id="MF_00211"/>
    </source>
</evidence>
<gene>
    <name evidence="1" type="primary">trpD</name>
    <name type="ordered locus">BMASAVP1_0646</name>
</gene>
<feature type="chain" id="PRO_1000042998" description="Anthranilate phosphoribosyltransferase">
    <location>
        <begin position="1"/>
        <end position="343"/>
    </location>
</feature>
<feature type="binding site" evidence="1">
    <location>
        <position position="84"/>
    </location>
    <ligand>
        <name>5-phospho-alpha-D-ribose 1-diphosphate</name>
        <dbReference type="ChEBI" id="CHEBI:58017"/>
    </ligand>
</feature>
<feature type="binding site" evidence="1">
    <location>
        <position position="84"/>
    </location>
    <ligand>
        <name>anthranilate</name>
        <dbReference type="ChEBI" id="CHEBI:16567"/>
        <label>1</label>
    </ligand>
</feature>
<feature type="binding site" evidence="1">
    <location>
        <begin position="87"/>
        <end position="88"/>
    </location>
    <ligand>
        <name>5-phospho-alpha-D-ribose 1-diphosphate</name>
        <dbReference type="ChEBI" id="CHEBI:58017"/>
    </ligand>
</feature>
<feature type="binding site" evidence="1">
    <location>
        <position position="92"/>
    </location>
    <ligand>
        <name>5-phospho-alpha-D-ribose 1-diphosphate</name>
        <dbReference type="ChEBI" id="CHEBI:58017"/>
    </ligand>
</feature>
<feature type="binding site" evidence="1">
    <location>
        <begin position="94"/>
        <end position="97"/>
    </location>
    <ligand>
        <name>5-phospho-alpha-D-ribose 1-diphosphate</name>
        <dbReference type="ChEBI" id="CHEBI:58017"/>
    </ligand>
</feature>
<feature type="binding site" evidence="1">
    <location>
        <position position="96"/>
    </location>
    <ligand>
        <name>Mg(2+)</name>
        <dbReference type="ChEBI" id="CHEBI:18420"/>
        <label>1</label>
    </ligand>
</feature>
<feature type="binding site" evidence="1">
    <location>
        <begin position="112"/>
        <end position="120"/>
    </location>
    <ligand>
        <name>5-phospho-alpha-D-ribose 1-diphosphate</name>
        <dbReference type="ChEBI" id="CHEBI:58017"/>
    </ligand>
</feature>
<feature type="binding site" evidence="1">
    <location>
        <position position="115"/>
    </location>
    <ligand>
        <name>anthranilate</name>
        <dbReference type="ChEBI" id="CHEBI:16567"/>
        <label>1</label>
    </ligand>
</feature>
<feature type="binding site" evidence="1">
    <location>
        <position position="124"/>
    </location>
    <ligand>
        <name>5-phospho-alpha-D-ribose 1-diphosphate</name>
        <dbReference type="ChEBI" id="CHEBI:58017"/>
    </ligand>
</feature>
<feature type="binding site" evidence="1">
    <location>
        <position position="170"/>
    </location>
    <ligand>
        <name>anthranilate</name>
        <dbReference type="ChEBI" id="CHEBI:16567"/>
        <label>2</label>
    </ligand>
</feature>
<feature type="binding site" evidence="1">
    <location>
        <position position="229"/>
    </location>
    <ligand>
        <name>Mg(2+)</name>
        <dbReference type="ChEBI" id="CHEBI:18420"/>
        <label>2</label>
    </ligand>
</feature>
<feature type="binding site" evidence="1">
    <location>
        <position position="230"/>
    </location>
    <ligand>
        <name>Mg(2+)</name>
        <dbReference type="ChEBI" id="CHEBI:18420"/>
        <label>1</label>
    </ligand>
</feature>
<feature type="binding site" evidence="1">
    <location>
        <position position="230"/>
    </location>
    <ligand>
        <name>Mg(2+)</name>
        <dbReference type="ChEBI" id="CHEBI:18420"/>
        <label>2</label>
    </ligand>
</feature>
<comment type="function">
    <text evidence="1">Catalyzes the transfer of the phosphoribosyl group of 5-phosphorylribose-1-pyrophosphate (PRPP) to anthranilate to yield N-(5'-phosphoribosyl)-anthranilate (PRA).</text>
</comment>
<comment type="catalytic activity">
    <reaction evidence="1">
        <text>N-(5-phospho-beta-D-ribosyl)anthranilate + diphosphate = 5-phospho-alpha-D-ribose 1-diphosphate + anthranilate</text>
        <dbReference type="Rhea" id="RHEA:11768"/>
        <dbReference type="ChEBI" id="CHEBI:16567"/>
        <dbReference type="ChEBI" id="CHEBI:18277"/>
        <dbReference type="ChEBI" id="CHEBI:33019"/>
        <dbReference type="ChEBI" id="CHEBI:58017"/>
        <dbReference type="EC" id="2.4.2.18"/>
    </reaction>
</comment>
<comment type="cofactor">
    <cofactor evidence="1">
        <name>Mg(2+)</name>
        <dbReference type="ChEBI" id="CHEBI:18420"/>
    </cofactor>
    <text evidence="1">Binds 2 magnesium ions per monomer.</text>
</comment>
<comment type="pathway">
    <text evidence="1">Amino-acid biosynthesis; L-tryptophan biosynthesis; L-tryptophan from chorismate: step 2/5.</text>
</comment>
<comment type="subunit">
    <text evidence="1">Homodimer.</text>
</comment>
<comment type="similarity">
    <text evidence="1">Belongs to the anthranilate phosphoribosyltransferase family.</text>
</comment>
<protein>
    <recommendedName>
        <fullName evidence="1">Anthranilate phosphoribosyltransferase</fullName>
        <ecNumber evidence="1">2.4.2.18</ecNumber>
    </recommendedName>
</protein>
<sequence>MTITPQEALQRTIEHREIFHDEMLHLMRLIMRGDMSPVMAAAIITGLRVKKETIGEIAAAATVMREFARRVEVEDNANFVDIVGTGGDGSHTFNISTATMFVAAAAGAKVAKHGNRGVSSKSGSADVLEALGVNIDLQPEQVAASIAETGMGFMFAPNHHPAMRNIAPVRRELGVRTIFNILGPLTNPADAPNQLMGVFHPDLVGIQVRVMQRLGAQHVLVVYGKDGMDEVSLGAATLVGELRDGEVREYEIHPEDFGMQMVSNRTLKVESADESRVMLLEALGNKPGVAREIVTLNAGTALYSADVAGSIADGIQLARDAIASGRAREKVDELVRFTQQFKR</sequence>
<proteinExistence type="inferred from homology"/>
<keyword id="KW-0028">Amino-acid biosynthesis</keyword>
<keyword id="KW-0057">Aromatic amino acid biosynthesis</keyword>
<keyword id="KW-0328">Glycosyltransferase</keyword>
<keyword id="KW-0460">Magnesium</keyword>
<keyword id="KW-0479">Metal-binding</keyword>
<keyword id="KW-0808">Transferase</keyword>
<keyword id="KW-0822">Tryptophan biosynthesis</keyword>
<organism>
    <name type="scientific">Burkholderia mallei (strain SAVP1)</name>
    <dbReference type="NCBI Taxonomy" id="320388"/>
    <lineage>
        <taxon>Bacteria</taxon>
        <taxon>Pseudomonadati</taxon>
        <taxon>Pseudomonadota</taxon>
        <taxon>Betaproteobacteria</taxon>
        <taxon>Burkholderiales</taxon>
        <taxon>Burkholderiaceae</taxon>
        <taxon>Burkholderia</taxon>
        <taxon>pseudomallei group</taxon>
    </lineage>
</organism>
<dbReference type="EC" id="2.4.2.18" evidence="1"/>
<dbReference type="EMBL" id="CP000525">
    <property type="protein sequence ID" value="ABM49105.1"/>
    <property type="molecule type" value="Genomic_DNA"/>
</dbReference>
<dbReference type="RefSeq" id="WP_004186823.1">
    <property type="nucleotide sequence ID" value="NC_008784.1"/>
</dbReference>
<dbReference type="SMR" id="A1UW99"/>
<dbReference type="GeneID" id="93061660"/>
<dbReference type="KEGG" id="bmv:BMASAVP1_0646"/>
<dbReference type="HOGENOM" id="CLU_034315_2_1_4"/>
<dbReference type="UniPathway" id="UPA00035">
    <property type="reaction ID" value="UER00041"/>
</dbReference>
<dbReference type="GO" id="GO:0005829">
    <property type="term" value="C:cytosol"/>
    <property type="evidence" value="ECO:0007669"/>
    <property type="project" value="TreeGrafter"/>
</dbReference>
<dbReference type="GO" id="GO:0004048">
    <property type="term" value="F:anthranilate phosphoribosyltransferase activity"/>
    <property type="evidence" value="ECO:0007669"/>
    <property type="project" value="UniProtKB-UniRule"/>
</dbReference>
<dbReference type="GO" id="GO:0000287">
    <property type="term" value="F:magnesium ion binding"/>
    <property type="evidence" value="ECO:0007669"/>
    <property type="project" value="UniProtKB-UniRule"/>
</dbReference>
<dbReference type="GO" id="GO:0000162">
    <property type="term" value="P:L-tryptophan biosynthetic process"/>
    <property type="evidence" value="ECO:0007669"/>
    <property type="project" value="UniProtKB-UniRule"/>
</dbReference>
<dbReference type="FunFam" id="1.20.970.10:FF:000006">
    <property type="entry name" value="Anthranilate phosphoribosyltransferase"/>
    <property type="match status" value="1"/>
</dbReference>
<dbReference type="FunFam" id="3.40.1030.10:FF:000002">
    <property type="entry name" value="Anthranilate phosphoribosyltransferase"/>
    <property type="match status" value="1"/>
</dbReference>
<dbReference type="Gene3D" id="3.40.1030.10">
    <property type="entry name" value="Nucleoside phosphorylase/phosphoribosyltransferase catalytic domain"/>
    <property type="match status" value="1"/>
</dbReference>
<dbReference type="Gene3D" id="1.20.970.10">
    <property type="entry name" value="Transferase, Pyrimidine Nucleoside Phosphorylase, Chain C"/>
    <property type="match status" value="1"/>
</dbReference>
<dbReference type="HAMAP" id="MF_00211">
    <property type="entry name" value="TrpD"/>
    <property type="match status" value="1"/>
</dbReference>
<dbReference type="InterPro" id="IPR005940">
    <property type="entry name" value="Anthranilate_Pribosyl_Tfrase"/>
</dbReference>
<dbReference type="InterPro" id="IPR000312">
    <property type="entry name" value="Glycosyl_Trfase_fam3"/>
</dbReference>
<dbReference type="InterPro" id="IPR017459">
    <property type="entry name" value="Glycosyl_Trfase_fam3_N_dom"/>
</dbReference>
<dbReference type="InterPro" id="IPR036320">
    <property type="entry name" value="Glycosyl_Trfase_fam3_N_dom_sf"/>
</dbReference>
<dbReference type="InterPro" id="IPR035902">
    <property type="entry name" value="Nuc_phospho_transferase"/>
</dbReference>
<dbReference type="NCBIfam" id="TIGR01245">
    <property type="entry name" value="trpD"/>
    <property type="match status" value="1"/>
</dbReference>
<dbReference type="PANTHER" id="PTHR43285">
    <property type="entry name" value="ANTHRANILATE PHOSPHORIBOSYLTRANSFERASE"/>
    <property type="match status" value="1"/>
</dbReference>
<dbReference type="PANTHER" id="PTHR43285:SF2">
    <property type="entry name" value="ANTHRANILATE PHOSPHORIBOSYLTRANSFERASE"/>
    <property type="match status" value="1"/>
</dbReference>
<dbReference type="Pfam" id="PF02885">
    <property type="entry name" value="Glycos_trans_3N"/>
    <property type="match status" value="1"/>
</dbReference>
<dbReference type="Pfam" id="PF00591">
    <property type="entry name" value="Glycos_transf_3"/>
    <property type="match status" value="1"/>
</dbReference>
<dbReference type="SUPFAM" id="SSF52418">
    <property type="entry name" value="Nucleoside phosphorylase/phosphoribosyltransferase catalytic domain"/>
    <property type="match status" value="1"/>
</dbReference>
<dbReference type="SUPFAM" id="SSF47648">
    <property type="entry name" value="Nucleoside phosphorylase/phosphoribosyltransferase N-terminal domain"/>
    <property type="match status" value="1"/>
</dbReference>
<accession>A1UW99</accession>